<organism>
    <name type="scientific">Invertebrate iridescent virus 3</name>
    <name type="common">IIV-3</name>
    <name type="synonym">Mosquito iridescent virus</name>
    <dbReference type="NCBI Taxonomy" id="345201"/>
    <lineage>
        <taxon>Viruses</taxon>
        <taxon>Varidnaviria</taxon>
        <taxon>Bamfordvirae</taxon>
        <taxon>Nucleocytoviricota</taxon>
        <taxon>Megaviricetes</taxon>
        <taxon>Pimascovirales</taxon>
        <taxon>Iridoviridae</taxon>
        <taxon>Betairidovirinae</taxon>
        <taxon>Chloriridovirus</taxon>
    </lineage>
</organism>
<feature type="chain" id="PRO_0000377945" description="Uncharacterized protein 023R">
    <location>
        <begin position="1"/>
        <end position="106"/>
    </location>
</feature>
<dbReference type="EMBL" id="DQ643392">
    <property type="protein sequence ID" value="ABF82053.1"/>
    <property type="molecule type" value="Genomic_DNA"/>
</dbReference>
<dbReference type="RefSeq" id="YP_654595.1">
    <property type="nucleotide sequence ID" value="NC_008187.1"/>
</dbReference>
<dbReference type="SMR" id="Q197D7"/>
<dbReference type="KEGG" id="vg:4156230"/>
<dbReference type="OrthoDB" id="22481at10239"/>
<dbReference type="Proteomes" id="UP000001358">
    <property type="component" value="Genome"/>
</dbReference>
<proteinExistence type="predicted"/>
<organismHost>
    <name type="scientific">Aedes vexans</name>
    <name type="common">Inland floodwater mosquito</name>
    <name type="synonym">Culex vexans</name>
    <dbReference type="NCBI Taxonomy" id="7163"/>
</organismHost>
<organismHost>
    <name type="scientific">Culex territans</name>
    <dbReference type="NCBI Taxonomy" id="42431"/>
</organismHost>
<organismHost>
    <name type="scientific">Culiseta annulata</name>
    <dbReference type="NCBI Taxonomy" id="332058"/>
</organismHost>
<organismHost>
    <name type="scientific">Ochlerotatus sollicitans</name>
    <name type="common">eastern saltmarsh mosquito</name>
    <dbReference type="NCBI Taxonomy" id="310513"/>
</organismHost>
<organismHost>
    <name type="scientific">Ochlerotatus taeniorhynchus</name>
    <name type="common">Black salt marsh mosquito</name>
    <name type="synonym">Aedes taeniorhynchus</name>
    <dbReference type="NCBI Taxonomy" id="329105"/>
</organismHost>
<organismHost>
    <name type="scientific">Psorophora ferox</name>
    <dbReference type="NCBI Taxonomy" id="7183"/>
</organismHost>
<reference key="1">
    <citation type="journal article" date="2006" name="J. Virol.">
        <title>Genome of invertebrate iridescent virus type 3 (mosquito iridescent virus).</title>
        <authorList>
            <person name="Delhon G."/>
            <person name="Tulman E.R."/>
            <person name="Afonso C.L."/>
            <person name="Lu Z."/>
            <person name="Becnel J.J."/>
            <person name="Moser B.A."/>
            <person name="Kutish G.F."/>
            <person name="Rock D.L."/>
        </authorList>
    </citation>
    <scope>NUCLEOTIDE SEQUENCE [LARGE SCALE GENOMIC DNA]</scope>
</reference>
<gene>
    <name type="ORF">IIV3-023R</name>
</gene>
<protein>
    <recommendedName>
        <fullName>Uncharacterized protein 023R</fullName>
    </recommendedName>
</protein>
<sequence length="106" mass="12767">MGSYMLFDSLIKLVENRNPLNHEQKLWLIDVINNTLNLEGKEKLYSLLIVHNKQQTKIYDPKEPFYDIEKIPVQLQLVWYEFTKMHLKSQNEDRRRKMSLYAGRSP</sequence>
<accession>Q197D7</accession>
<name>023R_IIV3</name>
<keyword id="KW-1185">Reference proteome</keyword>